<evidence type="ECO:0000250" key="1"/>
<evidence type="ECO:0000250" key="2">
    <source>
        <dbReference type="UniProtKB" id="P21583"/>
    </source>
</evidence>
<evidence type="ECO:0000255" key="3"/>
<evidence type="ECO:0000256" key="4">
    <source>
        <dbReference type="SAM" id="MobiDB-lite"/>
    </source>
</evidence>
<evidence type="ECO:0000269" key="5">
    <source>
    </source>
</evidence>
<evidence type="ECO:0000269" key="6">
    <source>
    </source>
</evidence>
<evidence type="ECO:0000269" key="7">
    <source>
    </source>
</evidence>
<evidence type="ECO:0000269" key="8">
    <source>
    </source>
</evidence>
<evidence type="ECO:0000269" key="9">
    <source>
    </source>
</evidence>
<evidence type="ECO:0000269" key="10">
    <source>
    </source>
</evidence>
<evidence type="ECO:0000269" key="11">
    <source>
    </source>
</evidence>
<evidence type="ECO:0000269" key="12">
    <source>
    </source>
</evidence>
<evidence type="ECO:0000305" key="13"/>
<evidence type="ECO:0007829" key="14">
    <source>
        <dbReference type="PDB" id="2O26"/>
    </source>
</evidence>
<evidence type="ECO:0007829" key="15">
    <source>
        <dbReference type="PDB" id="2O27"/>
    </source>
</evidence>
<sequence>MKKTQTWIITCIYLQLLLFNPLVKTKEICGNPVTDNVKDITKLVANLPNDYMITLNYVAGMDVLPSHCWLRDMVIQLSLSLTTLLDKFSNISEGLSNYSIIDKLGKIVDDLVLCMEENAPKNIKESPKRPETRSFTPEEFFSIFNRSIDAFKDFMVASDTSDCVLSSTLGPEKDSRVSVTKPFMLPPVAASSLRNDSSSSNRKAAKAPEDSGLQWTAMALPALISLVIGFAFGALYWKKKQSSLTRAVENIQINEEDNEISMLQQKEREFQEV</sequence>
<accession>P20826</accession>
<accession>P97332</accession>
<accession>Q3TNJ7</accession>
<accession>Q62524</accession>
<accession>Q64222</accession>
<accession>Q921N5</accession>
<keyword id="KW-0002">3D-structure</keyword>
<keyword id="KW-0025">Alternative splicing</keyword>
<keyword id="KW-0130">Cell adhesion</keyword>
<keyword id="KW-1003">Cell membrane</keyword>
<keyword id="KW-0966">Cell projection</keyword>
<keyword id="KW-0963">Cytoplasm</keyword>
<keyword id="KW-0206">Cytoskeleton</keyword>
<keyword id="KW-0903">Direct protein sequencing</keyword>
<keyword id="KW-1015">Disulfide bond</keyword>
<keyword id="KW-0325">Glycoprotein</keyword>
<keyword id="KW-0339">Growth factor</keyword>
<keyword id="KW-0472">Membrane</keyword>
<keyword id="KW-1185">Reference proteome</keyword>
<keyword id="KW-0964">Secreted</keyword>
<keyword id="KW-0732">Signal</keyword>
<keyword id="KW-0812">Transmembrane</keyword>
<keyword id="KW-1133">Transmembrane helix</keyword>
<protein>
    <recommendedName>
        <fullName>Kit ligand</fullName>
    </recommendedName>
    <alternativeName>
        <fullName>Hematopoietic growth factor KL</fullName>
    </alternativeName>
    <alternativeName>
        <fullName>Mast cell growth factor</fullName>
        <shortName>MGF</shortName>
    </alternativeName>
    <alternativeName>
        <fullName>Steel factor</fullName>
    </alternativeName>
    <alternativeName>
        <fullName>Stem cell factor</fullName>
        <shortName>SCF</shortName>
    </alternativeName>
    <alternativeName>
        <fullName>c-Kit ligand</fullName>
    </alternativeName>
    <component>
        <recommendedName>
            <fullName>Soluble KIT ligand</fullName>
            <shortName>sKITLG</shortName>
        </recommendedName>
    </component>
</protein>
<feature type="signal peptide" evidence="6 7 8">
    <location>
        <begin position="1"/>
        <end position="25"/>
    </location>
</feature>
<feature type="chain" id="PRO_0000031914" description="Kit ligand">
    <location>
        <begin position="26"/>
        <end position="273"/>
    </location>
</feature>
<feature type="chain" id="PRO_0000403392" description="Soluble KIT ligand" evidence="1">
    <location>
        <begin position="26"/>
        <end position="190"/>
    </location>
</feature>
<feature type="topological domain" description="Extracellular" evidence="3">
    <location>
        <begin position="26"/>
        <end position="214"/>
    </location>
</feature>
<feature type="transmembrane region" description="Helical" evidence="3">
    <location>
        <begin position="215"/>
        <end position="237"/>
    </location>
</feature>
<feature type="topological domain" description="Cytoplasmic" evidence="3">
    <location>
        <begin position="238"/>
        <end position="273"/>
    </location>
</feature>
<feature type="region of interest" description="Disordered" evidence="4">
    <location>
        <begin position="190"/>
        <end position="210"/>
    </location>
</feature>
<feature type="compositionally biased region" description="Low complexity" evidence="4">
    <location>
        <begin position="191"/>
        <end position="202"/>
    </location>
</feature>
<feature type="glycosylation site" description="N-linked (GlcNAc...) asparagine" evidence="3">
    <location>
        <position position="90"/>
    </location>
</feature>
<feature type="glycosylation site" description="N-linked (GlcNAc...) asparagine" evidence="3">
    <location>
        <position position="97"/>
    </location>
</feature>
<feature type="glycosylation site" description="N-linked (GlcNAc...) asparagine" evidence="3">
    <location>
        <position position="145"/>
    </location>
</feature>
<feature type="glycosylation site" description="N-linked (GlcNAc...) asparagine" evidence="3">
    <location>
        <position position="195"/>
    </location>
</feature>
<feature type="disulfide bond" evidence="9">
    <location>
        <begin position="29"/>
        <end position="114"/>
    </location>
</feature>
<feature type="disulfide bond" evidence="9">
    <location>
        <begin position="68"/>
        <end position="163"/>
    </location>
</feature>
<feature type="splice variant" id="VSP_006023" description="In isoform 2." evidence="13">
    <original>DSRVSVTKPFMLPPVAASSLRNDSSSSNR</original>
    <variation>G</variation>
    <location>
        <begin position="174"/>
        <end position="202"/>
    </location>
</feature>
<feature type="sequence variant" description="In MGFSL-3NEU." evidence="12">
    <original>N</original>
    <variation>S</variation>
    <location>
        <position position="122"/>
    </location>
</feature>
<feature type="sequence variant" evidence="11 12">
    <original>L</original>
    <variation>P</variation>
    <location>
        <position position="193"/>
    </location>
</feature>
<feature type="sequence variant" evidence="5 11 12">
    <original>A</original>
    <variation>S</variation>
    <location>
        <position position="207"/>
    </location>
</feature>
<feature type="sequence conflict" description="In Ref. 2; AAB22555/AAB22554." evidence="13" ref="2">
    <original>W</original>
    <variation>L</variation>
    <location>
        <position position="215"/>
    </location>
</feature>
<feature type="helix" evidence="14">
    <location>
        <begin position="35"/>
        <end position="39"/>
    </location>
</feature>
<feature type="helix" evidence="15">
    <location>
        <begin position="40"/>
        <end position="45"/>
    </location>
</feature>
<feature type="strand" evidence="15">
    <location>
        <begin position="53"/>
        <end position="57"/>
    </location>
</feature>
<feature type="turn" evidence="15">
    <location>
        <begin position="59"/>
        <end position="63"/>
    </location>
</feature>
<feature type="helix" evidence="15">
    <location>
        <begin position="66"/>
        <end position="68"/>
    </location>
</feature>
<feature type="helix" evidence="15">
    <location>
        <begin position="70"/>
        <end position="85"/>
    </location>
</feature>
<feature type="helix" evidence="15">
    <location>
        <begin position="97"/>
        <end position="118"/>
    </location>
</feature>
<feature type="strand" evidence="15">
    <location>
        <begin position="131"/>
        <end position="135"/>
    </location>
</feature>
<feature type="helix" evidence="15">
    <location>
        <begin position="137"/>
        <end position="151"/>
    </location>
</feature>
<feature type="turn" evidence="14">
    <location>
        <begin position="153"/>
        <end position="156"/>
    </location>
</feature>
<name>SCF_MOUSE</name>
<reference key="1">
    <citation type="journal article" date="1990" name="Cell">
        <title>Molecular cloning of mast cell growth factor, a hematopoietin that is active in both membrane bound and soluble forms.</title>
        <authorList>
            <person name="Anderson D.M."/>
            <person name="Lyman S.D."/>
            <person name="Baird A."/>
            <person name="Wignall J.M."/>
            <person name="Eisenman J."/>
            <person name="Rauch C."/>
            <person name="March C.J."/>
            <person name="Boswell H.S."/>
            <person name="Gimpel S.D."/>
            <person name="Cosman D."/>
            <person name="Williams D.E."/>
        </authorList>
    </citation>
    <scope>NUCLEOTIDE SEQUENCE [MRNA] (ISOFORM 1)</scope>
    <source>
        <strain>WCB6F1</strain>
    </source>
</reference>
<reference key="2">
    <citation type="journal article" date="1992" name="Mol. Biol. Cell">
        <title>Differential expression and processing of two cell associated forms of the kit-ligand: KL-1 and KL-2.</title>
        <authorList>
            <person name="Huang E.J."/>
            <person name="Nocka K.H."/>
            <person name="Buck J."/>
            <person name="Besmer P."/>
        </authorList>
    </citation>
    <scope>NUCLEOTIDE SEQUENCE (ISOFORMS 1 AND 2)</scope>
</reference>
<reference key="3">
    <citation type="journal article" date="1991" name="Cell">
        <title>Transmembrane form of the kit ligand growth factor is determined by alternative splicing and is missing in the Sld mutant.</title>
        <authorList>
            <person name="Flanagan J.G."/>
            <person name="Chan D.C."/>
            <person name="Leder P."/>
        </authorList>
    </citation>
    <scope>NUCLEOTIDE SEQUENCE (ISOFORMS 1 AND 2)</scope>
    <source>
        <strain>WCB6F1</strain>
    </source>
</reference>
<reference key="4">
    <citation type="journal article" date="1992" name="Genes Dev.">
        <title>Developmental abnormalities in Steel17H mice result from a splicing defect in the steel factor cytoplasmic tail.</title>
        <authorList>
            <person name="Brannan C.I."/>
            <person name="Bedell M.A."/>
            <person name="Resnick J.L."/>
            <person name="Eppig J.J."/>
            <person name="Handel M.A."/>
            <person name="Williams D.E."/>
            <person name="Lyman S.D."/>
            <person name="Donovan P.J."/>
            <person name="Jenkins N.A."/>
            <person name="Copeland N.G."/>
        </authorList>
    </citation>
    <scope>NUCLEOTIDE SEQUENCE (ISOFORM 1)</scope>
</reference>
<reference key="5">
    <citation type="journal article" date="1996" name="Genetics">
        <title>Multiple pathways for Steel regulation suggested by genomic and sequence analysis of the murine Steel gene.</title>
        <authorList>
            <person name="Bedell M.A."/>
            <person name="Copeland N.G."/>
            <person name="Jenkins N.A."/>
        </authorList>
    </citation>
    <scope>NUCLEOTIDE SEQUENCE [GENOMIC DNA / MRNA] (ISOFORM 1)</scope>
    <source>
        <strain>C57BL/6J</strain>
    </source>
</reference>
<reference key="6">
    <citation type="journal article" date="1996" name="Mamm. Genome">
        <title>Molecular analysis of two new Steel mutations in mice shows a transversion or an insertion.</title>
        <authorList>
            <person name="Graw J."/>
            <person name="Loester J."/>
            <person name="Neuhaeuser-Klaus A."/>
            <person name="Pretsch W."/>
            <person name="Schmitt-John T."/>
        </authorList>
    </citation>
    <scope>NUCLEOTIDE SEQUENCE [MRNA] (ISOFORM 1)</scope>
    <scope>VARIANTS PRO-193 AND SER-207</scope>
    <source>
        <strain>C3H/E1</strain>
        <tissue>Brain</tissue>
    </source>
</reference>
<reference key="7">
    <citation type="journal article" date="1997" name="Mutat. Res.">
        <title>Detection of a point mutation (A to G) in exon 5 of the murine Mgf gene defines a novel allele at the Steel locus with a weak phenotype.</title>
        <authorList>
            <person name="Graw J."/>
            <person name="Neuhauser-Klaus A."/>
            <person name="Pretsch W."/>
        </authorList>
    </citation>
    <scope>NUCLEOTIDE SEQUENCE [MRNA] (ISOFORM 1)</scope>
    <scope>VARIANTS SER-122; PRO-193 AND SER-207</scope>
    <source>
        <strain>102/E1 X C3H/E1</strain>
    </source>
</reference>
<reference key="8">
    <citation type="journal article" date="2005" name="Science">
        <title>The transcriptional landscape of the mammalian genome.</title>
        <authorList>
            <person name="Carninci P."/>
            <person name="Kasukawa T."/>
            <person name="Katayama S."/>
            <person name="Gough J."/>
            <person name="Frith M.C."/>
            <person name="Maeda N."/>
            <person name="Oyama R."/>
            <person name="Ravasi T."/>
            <person name="Lenhard B."/>
            <person name="Wells C."/>
            <person name="Kodzius R."/>
            <person name="Shimokawa K."/>
            <person name="Bajic V.B."/>
            <person name="Brenner S.E."/>
            <person name="Batalov S."/>
            <person name="Forrest A.R."/>
            <person name="Zavolan M."/>
            <person name="Davis M.J."/>
            <person name="Wilming L.G."/>
            <person name="Aidinis V."/>
            <person name="Allen J.E."/>
            <person name="Ambesi-Impiombato A."/>
            <person name="Apweiler R."/>
            <person name="Aturaliya R.N."/>
            <person name="Bailey T.L."/>
            <person name="Bansal M."/>
            <person name="Baxter L."/>
            <person name="Beisel K.W."/>
            <person name="Bersano T."/>
            <person name="Bono H."/>
            <person name="Chalk A.M."/>
            <person name="Chiu K.P."/>
            <person name="Choudhary V."/>
            <person name="Christoffels A."/>
            <person name="Clutterbuck D.R."/>
            <person name="Crowe M.L."/>
            <person name="Dalla E."/>
            <person name="Dalrymple B.P."/>
            <person name="de Bono B."/>
            <person name="Della Gatta G."/>
            <person name="di Bernardo D."/>
            <person name="Down T."/>
            <person name="Engstrom P."/>
            <person name="Fagiolini M."/>
            <person name="Faulkner G."/>
            <person name="Fletcher C.F."/>
            <person name="Fukushima T."/>
            <person name="Furuno M."/>
            <person name="Futaki S."/>
            <person name="Gariboldi M."/>
            <person name="Georgii-Hemming P."/>
            <person name="Gingeras T.R."/>
            <person name="Gojobori T."/>
            <person name="Green R.E."/>
            <person name="Gustincich S."/>
            <person name="Harbers M."/>
            <person name="Hayashi Y."/>
            <person name="Hensch T.K."/>
            <person name="Hirokawa N."/>
            <person name="Hill D."/>
            <person name="Huminiecki L."/>
            <person name="Iacono M."/>
            <person name="Ikeo K."/>
            <person name="Iwama A."/>
            <person name="Ishikawa T."/>
            <person name="Jakt M."/>
            <person name="Kanapin A."/>
            <person name="Katoh M."/>
            <person name="Kawasawa Y."/>
            <person name="Kelso J."/>
            <person name="Kitamura H."/>
            <person name="Kitano H."/>
            <person name="Kollias G."/>
            <person name="Krishnan S.P."/>
            <person name="Kruger A."/>
            <person name="Kummerfeld S.K."/>
            <person name="Kurochkin I.V."/>
            <person name="Lareau L.F."/>
            <person name="Lazarevic D."/>
            <person name="Lipovich L."/>
            <person name="Liu J."/>
            <person name="Liuni S."/>
            <person name="McWilliam S."/>
            <person name="Madan Babu M."/>
            <person name="Madera M."/>
            <person name="Marchionni L."/>
            <person name="Matsuda H."/>
            <person name="Matsuzawa S."/>
            <person name="Miki H."/>
            <person name="Mignone F."/>
            <person name="Miyake S."/>
            <person name="Morris K."/>
            <person name="Mottagui-Tabar S."/>
            <person name="Mulder N."/>
            <person name="Nakano N."/>
            <person name="Nakauchi H."/>
            <person name="Ng P."/>
            <person name="Nilsson R."/>
            <person name="Nishiguchi S."/>
            <person name="Nishikawa S."/>
            <person name="Nori F."/>
            <person name="Ohara O."/>
            <person name="Okazaki Y."/>
            <person name="Orlando V."/>
            <person name="Pang K.C."/>
            <person name="Pavan W.J."/>
            <person name="Pavesi G."/>
            <person name="Pesole G."/>
            <person name="Petrovsky N."/>
            <person name="Piazza S."/>
            <person name="Reed J."/>
            <person name="Reid J.F."/>
            <person name="Ring B.Z."/>
            <person name="Ringwald M."/>
            <person name="Rost B."/>
            <person name="Ruan Y."/>
            <person name="Salzberg S.L."/>
            <person name="Sandelin A."/>
            <person name="Schneider C."/>
            <person name="Schoenbach C."/>
            <person name="Sekiguchi K."/>
            <person name="Semple C.A."/>
            <person name="Seno S."/>
            <person name="Sessa L."/>
            <person name="Sheng Y."/>
            <person name="Shibata Y."/>
            <person name="Shimada H."/>
            <person name="Shimada K."/>
            <person name="Silva D."/>
            <person name="Sinclair B."/>
            <person name="Sperling S."/>
            <person name="Stupka E."/>
            <person name="Sugiura K."/>
            <person name="Sultana R."/>
            <person name="Takenaka Y."/>
            <person name="Taki K."/>
            <person name="Tammoja K."/>
            <person name="Tan S.L."/>
            <person name="Tang S."/>
            <person name="Taylor M.S."/>
            <person name="Tegner J."/>
            <person name="Teichmann S.A."/>
            <person name="Ueda H.R."/>
            <person name="van Nimwegen E."/>
            <person name="Verardo R."/>
            <person name="Wei C.L."/>
            <person name="Yagi K."/>
            <person name="Yamanishi H."/>
            <person name="Zabarovsky E."/>
            <person name="Zhu S."/>
            <person name="Zimmer A."/>
            <person name="Hide W."/>
            <person name="Bult C."/>
            <person name="Grimmond S.M."/>
            <person name="Teasdale R.D."/>
            <person name="Liu E.T."/>
            <person name="Brusic V."/>
            <person name="Quackenbush J."/>
            <person name="Wahlestedt C."/>
            <person name="Mattick J.S."/>
            <person name="Hume D.A."/>
            <person name="Kai C."/>
            <person name="Sasaki D."/>
            <person name="Tomaru Y."/>
            <person name="Fukuda S."/>
            <person name="Kanamori-Katayama M."/>
            <person name="Suzuki M."/>
            <person name="Aoki J."/>
            <person name="Arakawa T."/>
            <person name="Iida J."/>
            <person name="Imamura K."/>
            <person name="Itoh M."/>
            <person name="Kato T."/>
            <person name="Kawaji H."/>
            <person name="Kawagashira N."/>
            <person name="Kawashima T."/>
            <person name="Kojima M."/>
            <person name="Kondo S."/>
            <person name="Konno H."/>
            <person name="Nakano K."/>
            <person name="Ninomiya N."/>
            <person name="Nishio T."/>
            <person name="Okada M."/>
            <person name="Plessy C."/>
            <person name="Shibata K."/>
            <person name="Shiraki T."/>
            <person name="Suzuki S."/>
            <person name="Tagami M."/>
            <person name="Waki K."/>
            <person name="Watahiki A."/>
            <person name="Okamura-Oho Y."/>
            <person name="Suzuki H."/>
            <person name="Kawai J."/>
            <person name="Hayashizaki Y."/>
        </authorList>
    </citation>
    <scope>NUCLEOTIDE SEQUENCE [LARGE SCALE MRNA] (ISOFORM 1)</scope>
    <source>
        <strain>C57BL/6J</strain>
        <tissue>Cerebellum</tissue>
        <tissue>Testis</tissue>
    </source>
</reference>
<reference key="9">
    <citation type="journal article" date="2004" name="Genome Res.">
        <title>The status, quality, and expansion of the NIH full-length cDNA project: the Mammalian Gene Collection (MGC).</title>
        <authorList>
            <consortium name="The MGC Project Team"/>
        </authorList>
    </citation>
    <scope>NUCLEOTIDE SEQUENCE [LARGE SCALE MRNA] (ISOFORM 1)</scope>
    <scope>VARIANT SER-207</scope>
</reference>
<reference key="10">
    <citation type="journal article" date="1990" name="Cell">
        <title>The hematopoietic growth factor KL is encoded by the Sl locus and is the ligand of the c-kit receptor, the gene product of the W locus.</title>
        <authorList>
            <person name="Huang E."/>
            <person name="Nocka K."/>
            <person name="Beier D.R."/>
            <person name="Chu T.Y."/>
            <person name="Buck J."/>
            <person name="Lahm H.W."/>
            <person name="Wellner D."/>
            <person name="Leder P."/>
            <person name="Besmer P."/>
        </authorList>
    </citation>
    <scope>NUCLEOTIDE SEQUENCE OF 1-270 (ISOFORM 1)</scope>
    <scope>PROTEIN SEQUENCE OF 26-65</scope>
</reference>
<reference key="11">
    <citation type="journal article" date="1990" name="Cell">
        <title>Stem cell factor is encoded at the Sl locus of the mouse and is the ligand for the c-kit tyrosine kinase receptor.</title>
        <authorList>
            <person name="Zsebo K.M."/>
            <person name="Williams D.A."/>
            <person name="Geissler E.N."/>
            <person name="Broudy V.C."/>
            <person name="Martin F.H."/>
            <person name="Atkins H.L."/>
            <person name="Hsu R.-Y."/>
            <person name="Birkett N.C."/>
            <person name="Okino K.H."/>
            <person name="Murdock D.C."/>
            <person name="Jacobsen F.W."/>
            <person name="Langley K.E."/>
            <person name="Smith K.A."/>
            <person name="Takeishi T."/>
            <person name="Cattanach B.M."/>
            <person name="Galli S.J."/>
            <person name="Suggs S.V."/>
        </authorList>
    </citation>
    <scope>NUCLEOTIDE SEQUENCE [MRNA] OF 1-201</scope>
</reference>
<reference key="12">
    <citation type="journal article" date="1990" name="Cell">
        <title>Mast cell growth factor maps near the steel locus on mouse chromosome 10 and is deleted in a number of steel alleles.</title>
        <authorList>
            <person name="Copeland N.G."/>
            <person name="Gilbert D.J."/>
            <person name="Cho B.C."/>
            <person name="Donovan P.J."/>
            <person name="Jenkins N.A."/>
            <person name="Cosman D."/>
            <person name="Anderson D."/>
            <person name="Lyman S.D."/>
            <person name="Williams D.E."/>
        </authorList>
    </citation>
    <scope>PROTEIN SEQUENCE OF 26-53</scope>
</reference>
<reference key="13">
    <citation type="journal article" date="1990" name="Cell">
        <title>Identification of a ligand for the c-kit proto-oncogene.</title>
        <authorList>
            <person name="Williams D.E."/>
            <person name="Eisenman J."/>
            <person name="Baird A."/>
            <person name="Rauch C."/>
            <person name="van Ness K."/>
            <person name="March C.J."/>
            <person name="Park L.S."/>
            <person name="Martin U."/>
            <person name="Mochizuki D.Y."/>
            <person name="Boswell H.S."/>
            <person name="Burgess G.S."/>
            <person name="Cosman D."/>
            <person name="Lyman S.D."/>
        </authorList>
    </citation>
    <scope>PROTEIN SEQUENCE OF 26-78</scope>
</reference>
<reference key="14">
    <citation type="journal article" date="2015" name="Am. J. Hum. Genet.">
        <title>Allelic Mutations of KITLG, Encoding KIT Ligand, Cause Asymmetric and Unilateral Hearing Loss and Waardenburg Syndrome Type 2.</title>
        <authorList>
            <consortium name="Baylor-Hopkins Center for Mendelian Genomics"/>
            <person name="Zazo Seco C."/>
            <person name="Serrao de Castro L."/>
            <person name="van Nierop J.W."/>
            <person name="Morin M."/>
            <person name="Jhangiani S."/>
            <person name="Verver E.J."/>
            <person name="Schraders M."/>
            <person name="Maiwald N."/>
            <person name="Wesdorp M."/>
            <person name="Venselaar H."/>
            <person name="Spruijt L."/>
            <person name="Oostrik J."/>
            <person name="Schoots J."/>
            <person name="van Reeuwijk J."/>
            <person name="Lelieveld S.H."/>
            <person name="Huygen P.L."/>
            <person name="Insenser M."/>
            <person name="Admiraal R.J."/>
            <person name="Pennings R.J."/>
            <person name="Hoefsloot L.H."/>
            <person name="Arias-Vasquez A."/>
            <person name="de Ligt J."/>
            <person name="Yntema H.G."/>
            <person name="Jansen J.H."/>
            <person name="Muzny D.M."/>
            <person name="Huls G."/>
            <person name="van Rossum M.M."/>
            <person name="Lupski J.R."/>
            <person name="Moreno-Pelayo M.A."/>
            <person name="Kunst H.P."/>
            <person name="Kremer H."/>
        </authorList>
    </citation>
    <scope>TISSUE SPECIFICITY</scope>
</reference>
<reference key="15">
    <citation type="journal article" date="2007" name="EMBO J.">
        <title>Structural basis for stem cell factor-KIT signaling and activation of class III receptor tyrosine kinases.</title>
        <authorList>
            <person name="Liu H."/>
            <person name="Chen X."/>
            <person name="Focia P.J."/>
            <person name="He X."/>
        </authorList>
    </citation>
    <scope>X-RAY CRYSTALLOGRAPHY (2.2 ANGSTROMS) OF 28-166 ALONE AND IN COMPLEX WITH KIT</scope>
    <scope>SUBUNIT</scope>
    <scope>DISULFIDE BONDS</scope>
</reference>
<dbReference type="EMBL" id="M59915">
    <property type="protein sequence ID" value="AAA40095.1"/>
    <property type="molecule type" value="mRNA"/>
</dbReference>
<dbReference type="EMBL" id="M57647">
    <property type="protein sequence ID" value="AAA39538.1"/>
    <property type="molecule type" value="mRNA"/>
</dbReference>
<dbReference type="EMBL" id="S40534">
    <property type="protein sequence ID" value="AAB22555.2"/>
    <property type="molecule type" value="mRNA"/>
</dbReference>
<dbReference type="EMBL" id="X68989">
    <property type="protein sequence ID" value="CAA48778.1"/>
    <property type="molecule type" value="mRNA"/>
</dbReference>
<dbReference type="EMBL" id="U44724">
    <property type="status" value="NOT_ANNOTATED_CDS"/>
    <property type="molecule type" value="Genomic_DNA"/>
</dbReference>
<dbReference type="EMBL" id="U44725">
    <property type="protein sequence ID" value="AAC52447.1"/>
    <property type="molecule type" value="mRNA"/>
</dbReference>
<dbReference type="EMBL" id="X95381">
    <property type="protein sequence ID" value="CAA64667.1"/>
    <property type="molecule type" value="mRNA"/>
</dbReference>
<dbReference type="EMBL" id="X99322">
    <property type="protein sequence ID" value="CAA67698.1"/>
    <property type="molecule type" value="mRNA"/>
</dbReference>
<dbReference type="EMBL" id="Y10287">
    <property type="protein sequence ID" value="CAA71329.1"/>
    <property type="molecule type" value="mRNA"/>
</dbReference>
<dbReference type="EMBL" id="AK018777">
    <property type="protein sequence ID" value="BAB31402.1"/>
    <property type="molecule type" value="mRNA"/>
</dbReference>
<dbReference type="EMBL" id="AK134301">
    <property type="protein sequence ID" value="BAE22091.1"/>
    <property type="molecule type" value="mRNA"/>
</dbReference>
<dbReference type="EMBL" id="AK165233">
    <property type="protein sequence ID" value="BAE38091.1"/>
    <property type="molecule type" value="mRNA"/>
</dbReference>
<dbReference type="EMBL" id="BC011322">
    <property type="protein sequence ID" value="AAH11322.1"/>
    <property type="molecule type" value="mRNA"/>
</dbReference>
<dbReference type="EMBL" id="S40364">
    <property type="protein sequence ID" value="AAB22554.2"/>
    <property type="molecule type" value="mRNA"/>
</dbReference>
<dbReference type="EMBL" id="M59912">
    <property type="protein sequence ID" value="AAA39539.1"/>
    <property type="molecule type" value="mRNA"/>
</dbReference>
<dbReference type="CCDS" id="CCDS36046.1">
    <molecule id="P20826-1"/>
</dbReference>
<dbReference type="CCDS" id="CCDS83751.1">
    <molecule id="P20826-2"/>
</dbReference>
<dbReference type="PIR" id="A35971">
    <property type="entry name" value="A35971"/>
</dbReference>
<dbReference type="PIR" id="A37934">
    <property type="entry name" value="A37934"/>
</dbReference>
<dbReference type="PIR" id="B35971">
    <property type="entry name" value="B35971"/>
</dbReference>
<dbReference type="PIR" id="S65801">
    <property type="entry name" value="S65801"/>
</dbReference>
<dbReference type="RefSeq" id="NP_001334085.1">
    <molecule id="P20826-2"/>
    <property type="nucleotide sequence ID" value="NM_001347156.1"/>
</dbReference>
<dbReference type="RefSeq" id="NP_038626.1">
    <molecule id="P20826-1"/>
    <property type="nucleotide sequence ID" value="NM_013598.3"/>
</dbReference>
<dbReference type="PDB" id="2O26">
    <property type="method" value="X-ray"/>
    <property type="resolution" value="2.50 A"/>
    <property type="chains" value="A/B/E/F=28-166"/>
</dbReference>
<dbReference type="PDB" id="2O27">
    <property type="method" value="X-ray"/>
    <property type="resolution" value="2.20 A"/>
    <property type="chains" value="A/B=28-166"/>
</dbReference>
<dbReference type="PDBsum" id="2O26"/>
<dbReference type="PDBsum" id="2O27"/>
<dbReference type="SMR" id="P20826"/>
<dbReference type="BioGRID" id="201412">
    <property type="interactions" value="2"/>
</dbReference>
<dbReference type="FunCoup" id="P20826">
    <property type="interactions" value="1000"/>
</dbReference>
<dbReference type="STRING" id="10090.ENSMUSP00000100920"/>
<dbReference type="GlyCosmos" id="P20826">
    <property type="glycosylation" value="4 sites, No reported glycans"/>
</dbReference>
<dbReference type="GlyGen" id="P20826">
    <property type="glycosylation" value="5 sites"/>
</dbReference>
<dbReference type="PhosphoSitePlus" id="P20826"/>
<dbReference type="PaxDb" id="10090-ENSMUSP00000100920"/>
<dbReference type="PeptideAtlas" id="P20826"/>
<dbReference type="ProteomicsDB" id="255488">
    <molecule id="P20826-1"/>
</dbReference>
<dbReference type="ProteomicsDB" id="255489">
    <molecule id="P20826-2"/>
</dbReference>
<dbReference type="Antibodypedia" id="3883">
    <property type="antibodies" value="924 antibodies from 47 providers"/>
</dbReference>
<dbReference type="DNASU" id="17311"/>
<dbReference type="Ensembl" id="ENSMUST00000020129.8">
    <molecule id="P20826-2"/>
    <property type="protein sequence ID" value="ENSMUSP00000020129.8"/>
    <property type="gene ID" value="ENSMUSG00000019966.19"/>
</dbReference>
<dbReference type="Ensembl" id="ENSMUST00000105283.9">
    <molecule id="P20826-1"/>
    <property type="protein sequence ID" value="ENSMUSP00000100920.2"/>
    <property type="gene ID" value="ENSMUSG00000019966.19"/>
</dbReference>
<dbReference type="GeneID" id="17311"/>
<dbReference type="KEGG" id="mmu:17311"/>
<dbReference type="UCSC" id="uc007gxp.1">
    <molecule id="P20826-1"/>
    <property type="organism name" value="mouse"/>
</dbReference>
<dbReference type="UCSC" id="uc007gxq.1">
    <molecule id="P20826-2"/>
    <property type="organism name" value="mouse"/>
</dbReference>
<dbReference type="AGR" id="MGI:96974"/>
<dbReference type="CTD" id="17311"/>
<dbReference type="MGI" id="MGI:96974">
    <property type="gene designation" value="Kitl"/>
</dbReference>
<dbReference type="VEuPathDB" id="HostDB:ENSMUSG00000019966"/>
<dbReference type="eggNOG" id="ENOG502QTGT">
    <property type="taxonomic scope" value="Eukaryota"/>
</dbReference>
<dbReference type="GeneTree" id="ENSGT00390000018272"/>
<dbReference type="HOGENOM" id="CLU_090207_0_0_1"/>
<dbReference type="InParanoid" id="P20826"/>
<dbReference type="OMA" id="TKGICRN"/>
<dbReference type="OrthoDB" id="8445223at2759"/>
<dbReference type="PhylomeDB" id="P20826"/>
<dbReference type="TreeFam" id="TF330811"/>
<dbReference type="Reactome" id="R-MMU-1257604">
    <property type="pathway name" value="PIP3 activates AKT signaling"/>
</dbReference>
<dbReference type="Reactome" id="R-MMU-1433557">
    <property type="pathway name" value="Signaling by SCF-KIT"/>
</dbReference>
<dbReference type="Reactome" id="R-MMU-1433559">
    <property type="pathway name" value="Regulation of KIT signaling"/>
</dbReference>
<dbReference type="Reactome" id="R-MMU-5673001">
    <property type="pathway name" value="RAF/MAP kinase cascade"/>
</dbReference>
<dbReference type="Reactome" id="R-MMU-6811558">
    <property type="pathway name" value="PI5P, PP2A and IER3 Regulate PI3K/AKT Signaling"/>
</dbReference>
<dbReference type="Reactome" id="R-MMU-9856649">
    <property type="pathway name" value="Transcriptional and post-translational regulation of MITF-M expression and activity"/>
</dbReference>
<dbReference type="BioGRID-ORCS" id="17311">
    <property type="hits" value="4 hits in 77 CRISPR screens"/>
</dbReference>
<dbReference type="EvolutionaryTrace" id="P20826"/>
<dbReference type="PRO" id="PR:P20826"/>
<dbReference type="Proteomes" id="UP000000589">
    <property type="component" value="Chromosome 10"/>
</dbReference>
<dbReference type="RNAct" id="P20826">
    <property type="molecule type" value="protein"/>
</dbReference>
<dbReference type="Bgee" id="ENSMUSG00000019966">
    <property type="expression patterns" value="Expressed in habenula and 311 other cell types or tissues"/>
</dbReference>
<dbReference type="ExpressionAtlas" id="P20826">
    <property type="expression patterns" value="baseline and differential"/>
</dbReference>
<dbReference type="GO" id="GO:0005737">
    <property type="term" value="C:cytoplasm"/>
    <property type="evidence" value="ECO:0000250"/>
    <property type="project" value="UniProtKB"/>
</dbReference>
<dbReference type="GO" id="GO:0005856">
    <property type="term" value="C:cytoskeleton"/>
    <property type="evidence" value="ECO:0007669"/>
    <property type="project" value="UniProtKB-SubCell"/>
</dbReference>
<dbReference type="GO" id="GO:0005576">
    <property type="term" value="C:extracellular region"/>
    <property type="evidence" value="ECO:0000304"/>
    <property type="project" value="Reactome"/>
</dbReference>
<dbReference type="GO" id="GO:0005615">
    <property type="term" value="C:extracellular space"/>
    <property type="evidence" value="ECO:0000314"/>
    <property type="project" value="MGI"/>
</dbReference>
<dbReference type="GO" id="GO:0030175">
    <property type="term" value="C:filopodium"/>
    <property type="evidence" value="ECO:0000250"/>
    <property type="project" value="UniProtKB"/>
</dbReference>
<dbReference type="GO" id="GO:0030027">
    <property type="term" value="C:lamellipodium"/>
    <property type="evidence" value="ECO:0000250"/>
    <property type="project" value="UniProtKB"/>
</dbReference>
<dbReference type="GO" id="GO:0016020">
    <property type="term" value="C:membrane"/>
    <property type="evidence" value="ECO:0000314"/>
    <property type="project" value="MGI"/>
</dbReference>
<dbReference type="GO" id="GO:0005886">
    <property type="term" value="C:plasma membrane"/>
    <property type="evidence" value="ECO:0000314"/>
    <property type="project" value="MGI"/>
</dbReference>
<dbReference type="GO" id="GO:0005125">
    <property type="term" value="F:cytokine activity"/>
    <property type="evidence" value="ECO:0000314"/>
    <property type="project" value="MGI"/>
</dbReference>
<dbReference type="GO" id="GO:0008083">
    <property type="term" value="F:growth factor activity"/>
    <property type="evidence" value="ECO:0007669"/>
    <property type="project" value="UniProtKB-KW"/>
</dbReference>
<dbReference type="GO" id="GO:0005173">
    <property type="term" value="F:stem cell factor receptor binding"/>
    <property type="evidence" value="ECO:0000314"/>
    <property type="project" value="MGI"/>
</dbReference>
<dbReference type="GO" id="GO:0006915">
    <property type="term" value="P:apoptotic process"/>
    <property type="evidence" value="ECO:0000316"/>
    <property type="project" value="MGI"/>
</dbReference>
<dbReference type="GO" id="GO:0007155">
    <property type="term" value="P:cell adhesion"/>
    <property type="evidence" value="ECO:0007669"/>
    <property type="project" value="UniProtKB-KW"/>
</dbReference>
<dbReference type="GO" id="GO:0008283">
    <property type="term" value="P:cell population proliferation"/>
    <property type="evidence" value="ECO:0000314"/>
    <property type="project" value="MGI"/>
</dbReference>
<dbReference type="GO" id="GO:0035234">
    <property type="term" value="P:ectopic germ cell programmed cell death"/>
    <property type="evidence" value="ECO:0000315"/>
    <property type="project" value="MGI"/>
</dbReference>
<dbReference type="GO" id="GO:0035162">
    <property type="term" value="P:embryonic hemopoiesis"/>
    <property type="evidence" value="ECO:0007669"/>
    <property type="project" value="Ensembl"/>
</dbReference>
<dbReference type="GO" id="GO:0097192">
    <property type="term" value="P:extrinsic apoptotic signaling pathway in absence of ligand"/>
    <property type="evidence" value="ECO:0000314"/>
    <property type="project" value="MGI"/>
</dbReference>
<dbReference type="GO" id="GO:0007281">
    <property type="term" value="P:germ cell development"/>
    <property type="evidence" value="ECO:0000304"/>
    <property type="project" value="MGI"/>
</dbReference>
<dbReference type="GO" id="GO:0002244">
    <property type="term" value="P:hematopoietic progenitor cell differentiation"/>
    <property type="evidence" value="ECO:0000316"/>
    <property type="project" value="MGI"/>
</dbReference>
<dbReference type="GO" id="GO:0008584">
    <property type="term" value="P:male gonad development"/>
    <property type="evidence" value="ECO:0007669"/>
    <property type="project" value="Ensembl"/>
</dbReference>
<dbReference type="GO" id="GO:0033024">
    <property type="term" value="P:mast cell apoptotic process"/>
    <property type="evidence" value="ECO:0000314"/>
    <property type="project" value="MGI"/>
</dbReference>
<dbReference type="GO" id="GO:0097531">
    <property type="term" value="P:mast cell migration"/>
    <property type="evidence" value="ECO:0000314"/>
    <property type="project" value="MGI"/>
</dbReference>
<dbReference type="GO" id="GO:0070662">
    <property type="term" value="P:mast cell proliferation"/>
    <property type="evidence" value="ECO:0000314"/>
    <property type="project" value="MGI"/>
</dbReference>
<dbReference type="GO" id="GO:0097324">
    <property type="term" value="P:melanocyte migration"/>
    <property type="evidence" value="ECO:0000314"/>
    <property type="project" value="MGI"/>
</dbReference>
<dbReference type="GO" id="GO:0002573">
    <property type="term" value="P:myeloid leukocyte differentiation"/>
    <property type="evidence" value="ECO:0000316"/>
    <property type="project" value="MGI"/>
</dbReference>
<dbReference type="GO" id="GO:0043066">
    <property type="term" value="P:negative regulation of apoptotic process"/>
    <property type="evidence" value="ECO:0000316"/>
    <property type="project" value="MGI"/>
</dbReference>
<dbReference type="GO" id="GO:0033026">
    <property type="term" value="P:negative regulation of mast cell apoptotic process"/>
    <property type="evidence" value="ECO:0000314"/>
    <property type="project" value="MGI"/>
</dbReference>
<dbReference type="GO" id="GO:0001755">
    <property type="term" value="P:neural crest cell migration"/>
    <property type="evidence" value="ECO:0000314"/>
    <property type="project" value="MGI"/>
</dbReference>
<dbReference type="GO" id="GO:0001541">
    <property type="term" value="P:ovarian follicle development"/>
    <property type="evidence" value="ECO:0007669"/>
    <property type="project" value="Ensembl"/>
</dbReference>
<dbReference type="GO" id="GO:0008284">
    <property type="term" value="P:positive regulation of cell population proliferation"/>
    <property type="evidence" value="ECO:0000314"/>
    <property type="project" value="MGI"/>
</dbReference>
<dbReference type="GO" id="GO:1901534">
    <property type="term" value="P:positive regulation of hematopoietic progenitor cell differentiation"/>
    <property type="evidence" value="ECO:0000316"/>
    <property type="project" value="MGI"/>
</dbReference>
<dbReference type="GO" id="GO:1902035">
    <property type="term" value="P:positive regulation of hematopoietic stem cell proliferation"/>
    <property type="evidence" value="ECO:0000314"/>
    <property type="project" value="MGI"/>
</dbReference>
<dbReference type="GO" id="GO:0002687">
    <property type="term" value="P:positive regulation of leukocyte migration"/>
    <property type="evidence" value="ECO:0000314"/>
    <property type="project" value="MGI"/>
</dbReference>
<dbReference type="GO" id="GO:0070668">
    <property type="term" value="P:positive regulation of mast cell proliferation"/>
    <property type="evidence" value="ECO:0000314"/>
    <property type="project" value="MGI"/>
</dbReference>
<dbReference type="GO" id="GO:0045636">
    <property type="term" value="P:positive regulation of melanocyte differentiation"/>
    <property type="evidence" value="ECO:0000314"/>
    <property type="project" value="MGI"/>
</dbReference>
<dbReference type="GO" id="GO:0002763">
    <property type="term" value="P:positive regulation of myeloid leukocyte differentiation"/>
    <property type="evidence" value="ECO:0000316"/>
    <property type="project" value="MGI"/>
</dbReference>
<dbReference type="GO" id="GO:0046579">
    <property type="term" value="P:positive regulation of Ras protein signal transduction"/>
    <property type="evidence" value="ECO:0000314"/>
    <property type="project" value="MGI"/>
</dbReference>
<dbReference type="GO" id="GO:0042102">
    <property type="term" value="P:positive regulation of T cell proliferation"/>
    <property type="evidence" value="ECO:0000314"/>
    <property type="project" value="MGI"/>
</dbReference>
<dbReference type="GO" id="GO:0007265">
    <property type="term" value="P:Ras protein signal transduction"/>
    <property type="evidence" value="ECO:0000314"/>
    <property type="project" value="MGI"/>
</dbReference>
<dbReference type="GO" id="GO:0042098">
    <property type="term" value="P:T cell proliferation"/>
    <property type="evidence" value="ECO:0000314"/>
    <property type="project" value="MGI"/>
</dbReference>
<dbReference type="FunFam" id="1.20.1250.10:FF:000004">
    <property type="entry name" value="Kit ligand"/>
    <property type="match status" value="1"/>
</dbReference>
<dbReference type="Gene3D" id="1.20.1250.10">
    <property type="match status" value="1"/>
</dbReference>
<dbReference type="InterPro" id="IPR009079">
    <property type="entry name" value="4_helix_cytokine-like_core"/>
</dbReference>
<dbReference type="InterPro" id="IPR003452">
    <property type="entry name" value="SCF"/>
</dbReference>
<dbReference type="PANTHER" id="PTHR11574">
    <property type="entry name" value="KIT LIGAND"/>
    <property type="match status" value="1"/>
</dbReference>
<dbReference type="PANTHER" id="PTHR11574:SF0">
    <property type="entry name" value="KIT LIGAND"/>
    <property type="match status" value="1"/>
</dbReference>
<dbReference type="Pfam" id="PF02404">
    <property type="entry name" value="SCF"/>
    <property type="match status" value="1"/>
</dbReference>
<dbReference type="PIRSF" id="PIRSF015599">
    <property type="entry name" value="SCF"/>
    <property type="match status" value="1"/>
</dbReference>
<dbReference type="SUPFAM" id="SSF47266">
    <property type="entry name" value="4-helical cytokines"/>
    <property type="match status" value="1"/>
</dbReference>
<organism>
    <name type="scientific">Mus musculus</name>
    <name type="common">Mouse</name>
    <dbReference type="NCBI Taxonomy" id="10090"/>
    <lineage>
        <taxon>Eukaryota</taxon>
        <taxon>Metazoa</taxon>
        <taxon>Chordata</taxon>
        <taxon>Craniata</taxon>
        <taxon>Vertebrata</taxon>
        <taxon>Euteleostomi</taxon>
        <taxon>Mammalia</taxon>
        <taxon>Eutheria</taxon>
        <taxon>Euarchontoglires</taxon>
        <taxon>Glires</taxon>
        <taxon>Rodentia</taxon>
        <taxon>Myomorpha</taxon>
        <taxon>Muroidea</taxon>
        <taxon>Muridae</taxon>
        <taxon>Murinae</taxon>
        <taxon>Mus</taxon>
        <taxon>Mus</taxon>
    </lineage>
</organism>
<proteinExistence type="evidence at protein level"/>
<gene>
    <name type="primary">Kitlg</name>
    <name type="synonym">Kitl</name>
    <name type="synonym">Mgf</name>
    <name type="synonym">Sl</name>
    <name type="synonym">Slf</name>
</gene>
<comment type="function">
    <text>Ligand for the receptor-type protein-tyrosine kinase KIT. Plays an essential role in the regulation of cell survival and proliferation, hematopoiesis, stem cell maintenance, gametogenesis, mast cell development, migration and function, and in melanogenesis. KITLG/SCF binding can activate several signaling pathways. Promotes phosphorylation of PIK3R1, the regulatory subunit of phosphatidylinositol 3-kinase, and subsequent activation of the kinase AKT1. KITLG/SCF and KIT also transmit signals via GRB2 and activation of RAS, RAF1 and the MAP kinases MAPK1/ERK2 and/or MAPK3/ERK1. KITLG/SCF and KIT promote activation of STAT family members STAT1, STAT3 and STAT5. KITLG/SCF and KIT promote activation of PLCG1, leading to the production of the cellular signaling molecules diacylglycerol and inositol 1,4,5-trisphosphate. KITLG/SCF acts synergistically with other cytokines, probably interleukins.</text>
</comment>
<comment type="subunit">
    <text evidence="9 13">Homodimer, non-covalently linked (Probable). Heterotetramer with KIT, binding two KIT molecules; thereby mediates KIT dimerization and subsequent activation by autophosphorylation.</text>
</comment>
<comment type="subcellular location">
    <molecule>Isoform 1</molecule>
    <subcellularLocation>
        <location evidence="1">Cell membrane</location>
        <topology evidence="1">Single-pass type I membrane protein</topology>
    </subcellularLocation>
</comment>
<comment type="subcellular location">
    <molecule>Isoform 2</molecule>
    <subcellularLocation>
        <location evidence="2">Cytoplasm</location>
    </subcellularLocation>
    <subcellularLocation>
        <location evidence="1">Cytoplasm</location>
        <location evidence="1">Cytoskeleton</location>
    </subcellularLocation>
    <subcellularLocation>
        <location evidence="2">Cell membrane</location>
        <topology evidence="1">Single-pass type I membrane protein</topology>
    </subcellularLocation>
    <subcellularLocation>
        <location evidence="2">Cytoplasm</location>
        <location evidence="2">Cytoskeleton</location>
    </subcellularLocation>
    <subcellularLocation>
        <location evidence="2">Cell projection</location>
        <location evidence="2">Lamellipodium</location>
    </subcellularLocation>
    <subcellularLocation>
        <location evidence="2">Cell projection</location>
        <location evidence="2">Filopodium</location>
    </subcellularLocation>
</comment>
<comment type="subcellular location">
    <molecule>Soluble KIT ligand</molecule>
    <subcellularLocation>
        <location evidence="1">Secreted</location>
    </subcellularLocation>
</comment>
<comment type="alternative products">
    <event type="alternative splicing"/>
    <isoform>
        <id>P20826-1</id>
        <name>1</name>
        <name>KL-1</name>
        <sequence type="displayed"/>
    </isoform>
    <isoform>
        <id>P20826-2</id>
        <name>2</name>
        <name>KL-2</name>
        <sequence type="described" ref="VSP_006023"/>
    </isoform>
</comment>
<comment type="tissue specificity">
    <text evidence="10">Expressed in the cochlea.</text>
</comment>
<comment type="developmental stage">
    <text>Acts in the early stages of hematopoiesis.</text>
</comment>
<comment type="PTM">
    <text>A soluble form is produced by proteolytic processing of isoform 1 in the extracellular domain.</text>
</comment>
<comment type="similarity">
    <text evidence="13">Belongs to the SCF family.</text>
</comment>